<accession>Q44681</accession>
<proteinExistence type="inferred from homology"/>
<sequence length="154" mass="16219">MNIIQGNLVGTGLKIGIVVGRFNEFITSKLLSGAEDTLIRHGVESNDIDVAWVPGAFEIPFAAKKMAETKKYDAVITLGTVIRGATTHYDYVCNEAAKGIAQAGTATGVPVIFGIVTTETIEQAIERAGTKAGNKGADCAVSAIEMANLNRSFE</sequence>
<evidence type="ECO:0000255" key="1">
    <source>
        <dbReference type="HAMAP-Rule" id="MF_00178"/>
    </source>
</evidence>
<keyword id="KW-0686">Riboflavin biosynthesis</keyword>
<keyword id="KW-0808">Transferase</keyword>
<gene>
    <name evidence="1" type="primary">ribH</name>
</gene>
<dbReference type="EC" id="2.5.1.78" evidence="1"/>
<dbReference type="EMBL" id="X95955">
    <property type="protein sequence ID" value="CAA65192.1"/>
    <property type="molecule type" value="Genomic_DNA"/>
</dbReference>
<dbReference type="PIR" id="T50544">
    <property type="entry name" value="T50544"/>
</dbReference>
<dbReference type="SMR" id="Q44681"/>
<dbReference type="STRING" id="692420.BAMF_2224"/>
<dbReference type="eggNOG" id="COG0054">
    <property type="taxonomic scope" value="Bacteria"/>
</dbReference>
<dbReference type="OMA" id="CQGVTQG"/>
<dbReference type="OrthoDB" id="9809709at2"/>
<dbReference type="BRENDA" id="2.5.1.78">
    <property type="organism ID" value="630"/>
</dbReference>
<dbReference type="UniPathway" id="UPA00275">
    <property type="reaction ID" value="UER00404"/>
</dbReference>
<dbReference type="GO" id="GO:0005829">
    <property type="term" value="C:cytosol"/>
    <property type="evidence" value="ECO:0007669"/>
    <property type="project" value="TreeGrafter"/>
</dbReference>
<dbReference type="GO" id="GO:0009349">
    <property type="term" value="C:riboflavin synthase complex"/>
    <property type="evidence" value="ECO:0007669"/>
    <property type="project" value="InterPro"/>
</dbReference>
<dbReference type="GO" id="GO:0000906">
    <property type="term" value="F:6,7-dimethyl-8-ribityllumazine synthase activity"/>
    <property type="evidence" value="ECO:0007669"/>
    <property type="project" value="UniProtKB-UniRule"/>
</dbReference>
<dbReference type="GO" id="GO:0009231">
    <property type="term" value="P:riboflavin biosynthetic process"/>
    <property type="evidence" value="ECO:0007669"/>
    <property type="project" value="UniProtKB-UniRule"/>
</dbReference>
<dbReference type="CDD" id="cd09209">
    <property type="entry name" value="Lumazine_synthase-I"/>
    <property type="match status" value="1"/>
</dbReference>
<dbReference type="FunFam" id="3.40.50.960:FF:000001">
    <property type="entry name" value="6,7-dimethyl-8-ribityllumazine synthase"/>
    <property type="match status" value="1"/>
</dbReference>
<dbReference type="Gene3D" id="3.40.50.960">
    <property type="entry name" value="Lumazine/riboflavin synthase"/>
    <property type="match status" value="1"/>
</dbReference>
<dbReference type="HAMAP" id="MF_00178">
    <property type="entry name" value="Lumazine_synth"/>
    <property type="match status" value="1"/>
</dbReference>
<dbReference type="InterPro" id="IPR034964">
    <property type="entry name" value="LS"/>
</dbReference>
<dbReference type="InterPro" id="IPR002180">
    <property type="entry name" value="LS/RS"/>
</dbReference>
<dbReference type="InterPro" id="IPR036467">
    <property type="entry name" value="LS/RS_sf"/>
</dbReference>
<dbReference type="NCBIfam" id="TIGR00114">
    <property type="entry name" value="lumazine-synth"/>
    <property type="match status" value="1"/>
</dbReference>
<dbReference type="NCBIfam" id="NF000812">
    <property type="entry name" value="PRK00061.1-4"/>
    <property type="match status" value="1"/>
</dbReference>
<dbReference type="PANTHER" id="PTHR21058:SF0">
    <property type="entry name" value="6,7-DIMETHYL-8-RIBITYLLUMAZINE SYNTHASE"/>
    <property type="match status" value="1"/>
</dbReference>
<dbReference type="PANTHER" id="PTHR21058">
    <property type="entry name" value="6,7-DIMETHYL-8-RIBITYLLUMAZINE SYNTHASE DMRL SYNTHASE LUMAZINE SYNTHASE"/>
    <property type="match status" value="1"/>
</dbReference>
<dbReference type="Pfam" id="PF00885">
    <property type="entry name" value="DMRL_synthase"/>
    <property type="match status" value="1"/>
</dbReference>
<dbReference type="SUPFAM" id="SSF52121">
    <property type="entry name" value="Lumazine synthase"/>
    <property type="match status" value="1"/>
</dbReference>
<organism>
    <name type="scientific">Bacillus amyloliquefaciens</name>
    <name type="common">Bacillus velezensis</name>
    <dbReference type="NCBI Taxonomy" id="1390"/>
    <lineage>
        <taxon>Bacteria</taxon>
        <taxon>Bacillati</taxon>
        <taxon>Bacillota</taxon>
        <taxon>Bacilli</taxon>
        <taxon>Bacillales</taxon>
        <taxon>Bacillaceae</taxon>
        <taxon>Bacillus</taxon>
        <taxon>Bacillus amyloliquefaciens group</taxon>
    </lineage>
</organism>
<comment type="function">
    <text evidence="1">Catalyzes the formation of 6,7-dimethyl-8-ribityllumazine by condensation of 5-amino-6-(D-ribitylamino)uracil with 3,4-dihydroxy-2-butanone 4-phosphate. This is the penultimate step in the biosynthesis of riboflavin.</text>
</comment>
<comment type="catalytic activity">
    <reaction evidence="1">
        <text>(2S)-2-hydroxy-3-oxobutyl phosphate + 5-amino-6-(D-ribitylamino)uracil = 6,7-dimethyl-8-(1-D-ribityl)lumazine + phosphate + 2 H2O + H(+)</text>
        <dbReference type="Rhea" id="RHEA:26152"/>
        <dbReference type="ChEBI" id="CHEBI:15377"/>
        <dbReference type="ChEBI" id="CHEBI:15378"/>
        <dbReference type="ChEBI" id="CHEBI:15934"/>
        <dbReference type="ChEBI" id="CHEBI:43474"/>
        <dbReference type="ChEBI" id="CHEBI:58201"/>
        <dbReference type="ChEBI" id="CHEBI:58830"/>
        <dbReference type="EC" id="2.5.1.78"/>
    </reaction>
</comment>
<comment type="pathway">
    <text evidence="1">Cofactor biosynthesis; riboflavin biosynthesis; riboflavin from 2-hydroxy-3-oxobutyl phosphate and 5-amino-6-(D-ribitylamino)uracil: step 1/2.</text>
</comment>
<comment type="subunit">
    <text evidence="1">Forms an icosahedral capsid composed of 60 subunits, arranged as a dodecamer of pentamers.</text>
</comment>
<comment type="similarity">
    <text evidence="1">Belongs to the DMRL synthase family.</text>
</comment>
<name>RISB_BACAM</name>
<reference key="1">
    <citation type="journal article" date="1997" name="Mol. Biol. (Mosk.)">
        <title>Riboflavin biosynthetic genes in Bacillus amyloliquefaciens: primary structure, organization and regulation of activity.</title>
        <authorList>
            <person name="Gusarov I.I."/>
            <person name="Kreneva R.A."/>
            <person name="Podcharniaev D.A."/>
            <person name="Iomantas I.U.V."/>
            <person name="Abalakina E.G."/>
            <person name="Stoinova N.V."/>
            <person name="Perumov D.A."/>
            <person name="Kozlov I.U.I."/>
        </authorList>
    </citation>
    <scope>NUCLEOTIDE SEQUENCE [GENOMIC DNA]</scope>
    <source>
        <strain>A 50</strain>
    </source>
</reference>
<protein>
    <recommendedName>
        <fullName evidence="1">6,7-dimethyl-8-ribityllumazine synthase</fullName>
        <shortName evidence="1">DMRL synthase</shortName>
        <shortName evidence="1">LS</shortName>
        <shortName evidence="1">Lumazine synthase</shortName>
        <ecNumber evidence="1">2.5.1.78</ecNumber>
    </recommendedName>
</protein>
<feature type="chain" id="PRO_0000134711" description="6,7-dimethyl-8-ribityllumazine synthase">
    <location>
        <begin position="1"/>
        <end position="154"/>
    </location>
</feature>
<feature type="active site" description="Proton donor" evidence="1">
    <location>
        <position position="88"/>
    </location>
</feature>
<feature type="binding site" evidence="1">
    <location>
        <position position="22"/>
    </location>
    <ligand>
        <name>5-amino-6-(D-ribitylamino)uracil</name>
        <dbReference type="ChEBI" id="CHEBI:15934"/>
    </ligand>
</feature>
<feature type="binding site" evidence="1">
    <location>
        <begin position="56"/>
        <end position="58"/>
    </location>
    <ligand>
        <name>5-amino-6-(D-ribitylamino)uracil</name>
        <dbReference type="ChEBI" id="CHEBI:15934"/>
    </ligand>
</feature>
<feature type="binding site" evidence="1">
    <location>
        <begin position="80"/>
        <end position="82"/>
    </location>
    <ligand>
        <name>5-amino-6-(D-ribitylamino)uracil</name>
        <dbReference type="ChEBI" id="CHEBI:15934"/>
    </ligand>
</feature>
<feature type="binding site" evidence="1">
    <location>
        <begin position="85"/>
        <end position="86"/>
    </location>
    <ligand>
        <name>(2S)-2-hydroxy-3-oxobutyl phosphate</name>
        <dbReference type="ChEBI" id="CHEBI:58830"/>
    </ligand>
</feature>
<feature type="binding site" evidence="1">
    <location>
        <position position="113"/>
    </location>
    <ligand>
        <name>5-amino-6-(D-ribitylamino)uracil</name>
        <dbReference type="ChEBI" id="CHEBI:15934"/>
    </ligand>
</feature>
<feature type="binding site" evidence="1">
    <location>
        <position position="127"/>
    </location>
    <ligand>
        <name>(2S)-2-hydroxy-3-oxobutyl phosphate</name>
        <dbReference type="ChEBI" id="CHEBI:58830"/>
    </ligand>
</feature>